<keyword id="KW-0963">Cytoplasm</keyword>
<keyword id="KW-0342">GTP-binding</keyword>
<keyword id="KW-0436">Ligase</keyword>
<keyword id="KW-0460">Magnesium</keyword>
<keyword id="KW-0479">Metal-binding</keyword>
<keyword id="KW-0547">Nucleotide-binding</keyword>
<keyword id="KW-0658">Purine biosynthesis</keyword>
<keyword id="KW-1185">Reference proteome</keyword>
<comment type="function">
    <text evidence="1">Plays an important role in the de novo pathway of purine nucleotide biosynthesis. Catalyzes the first committed step in the biosynthesis of AMP from IMP.</text>
</comment>
<comment type="catalytic activity">
    <reaction evidence="1">
        <text>IMP + L-aspartate + GTP = N(6)-(1,2-dicarboxyethyl)-AMP + GDP + phosphate + 2 H(+)</text>
        <dbReference type="Rhea" id="RHEA:15753"/>
        <dbReference type="ChEBI" id="CHEBI:15378"/>
        <dbReference type="ChEBI" id="CHEBI:29991"/>
        <dbReference type="ChEBI" id="CHEBI:37565"/>
        <dbReference type="ChEBI" id="CHEBI:43474"/>
        <dbReference type="ChEBI" id="CHEBI:57567"/>
        <dbReference type="ChEBI" id="CHEBI:58053"/>
        <dbReference type="ChEBI" id="CHEBI:58189"/>
        <dbReference type="EC" id="6.3.4.4"/>
    </reaction>
</comment>
<comment type="cofactor">
    <cofactor evidence="1">
        <name>Mg(2+)</name>
        <dbReference type="ChEBI" id="CHEBI:18420"/>
    </cofactor>
    <text evidence="1">Binds 1 Mg(2+) ion per subunit.</text>
</comment>
<comment type="pathway">
    <text evidence="1">Purine metabolism; AMP biosynthesis via de novo pathway; AMP from IMP: step 1/2.</text>
</comment>
<comment type="subunit">
    <text evidence="1">Homodimer.</text>
</comment>
<comment type="subcellular location">
    <subcellularLocation>
        <location evidence="1">Cytoplasm</location>
    </subcellularLocation>
</comment>
<comment type="similarity">
    <text evidence="1">Belongs to the adenylosuccinate synthetase family.</text>
</comment>
<comment type="sequence caution" evidence="2">
    <conflict type="erroneous initiation">
        <sequence resource="EMBL-CDS" id="ABE61970"/>
    </conflict>
</comment>
<feature type="chain" id="PRO_0000321803" description="Adenylosuccinate synthetase">
    <location>
        <begin position="1"/>
        <end position="430"/>
    </location>
</feature>
<feature type="active site" description="Proton acceptor" evidence="1">
    <location>
        <position position="13"/>
    </location>
</feature>
<feature type="active site" description="Proton donor" evidence="1">
    <location>
        <position position="41"/>
    </location>
</feature>
<feature type="binding site" evidence="1">
    <location>
        <begin position="12"/>
        <end position="18"/>
    </location>
    <ligand>
        <name>GTP</name>
        <dbReference type="ChEBI" id="CHEBI:37565"/>
    </ligand>
</feature>
<feature type="binding site" description="in other chain" evidence="1">
    <location>
        <begin position="13"/>
        <end position="16"/>
    </location>
    <ligand>
        <name>IMP</name>
        <dbReference type="ChEBI" id="CHEBI:58053"/>
        <note>ligand shared between dimeric partners</note>
    </ligand>
</feature>
<feature type="binding site" evidence="1">
    <location>
        <position position="13"/>
    </location>
    <ligand>
        <name>Mg(2+)</name>
        <dbReference type="ChEBI" id="CHEBI:18420"/>
    </ligand>
</feature>
<feature type="binding site" description="in other chain" evidence="1">
    <location>
        <begin position="38"/>
        <end position="41"/>
    </location>
    <ligand>
        <name>IMP</name>
        <dbReference type="ChEBI" id="CHEBI:58053"/>
        <note>ligand shared between dimeric partners</note>
    </ligand>
</feature>
<feature type="binding site" evidence="1">
    <location>
        <begin position="40"/>
        <end position="42"/>
    </location>
    <ligand>
        <name>GTP</name>
        <dbReference type="ChEBI" id="CHEBI:37565"/>
    </ligand>
</feature>
<feature type="binding site" evidence="1">
    <location>
        <position position="40"/>
    </location>
    <ligand>
        <name>Mg(2+)</name>
        <dbReference type="ChEBI" id="CHEBI:18420"/>
    </ligand>
</feature>
<feature type="binding site" description="in other chain" evidence="1">
    <location>
        <position position="130"/>
    </location>
    <ligand>
        <name>IMP</name>
        <dbReference type="ChEBI" id="CHEBI:58053"/>
        <note>ligand shared between dimeric partners</note>
    </ligand>
</feature>
<feature type="binding site" evidence="1">
    <location>
        <position position="144"/>
    </location>
    <ligand>
        <name>IMP</name>
        <dbReference type="ChEBI" id="CHEBI:58053"/>
        <note>ligand shared between dimeric partners</note>
    </ligand>
</feature>
<feature type="binding site" description="in other chain" evidence="1">
    <location>
        <position position="224"/>
    </location>
    <ligand>
        <name>IMP</name>
        <dbReference type="ChEBI" id="CHEBI:58053"/>
        <note>ligand shared between dimeric partners</note>
    </ligand>
</feature>
<feature type="binding site" description="in other chain" evidence="1">
    <location>
        <position position="239"/>
    </location>
    <ligand>
        <name>IMP</name>
        <dbReference type="ChEBI" id="CHEBI:58053"/>
        <note>ligand shared between dimeric partners</note>
    </ligand>
</feature>
<feature type="binding site" evidence="1">
    <location>
        <begin position="299"/>
        <end position="305"/>
    </location>
    <ligand>
        <name>substrate</name>
    </ligand>
</feature>
<feature type="binding site" description="in other chain" evidence="1">
    <location>
        <position position="303"/>
    </location>
    <ligand>
        <name>IMP</name>
        <dbReference type="ChEBI" id="CHEBI:58053"/>
        <note>ligand shared between dimeric partners</note>
    </ligand>
</feature>
<feature type="binding site" evidence="1">
    <location>
        <position position="305"/>
    </location>
    <ligand>
        <name>GTP</name>
        <dbReference type="ChEBI" id="CHEBI:37565"/>
    </ligand>
</feature>
<feature type="binding site" evidence="1">
    <location>
        <begin position="331"/>
        <end position="333"/>
    </location>
    <ligand>
        <name>GTP</name>
        <dbReference type="ChEBI" id="CHEBI:37565"/>
    </ligand>
</feature>
<feature type="binding site" evidence="1">
    <location>
        <begin position="413"/>
        <end position="415"/>
    </location>
    <ligand>
        <name>GTP</name>
        <dbReference type="ChEBI" id="CHEBI:37565"/>
    </ligand>
</feature>
<proteinExistence type="inferred from homology"/>
<name>PURA_NITHX</name>
<accession>Q1QP77</accession>
<gene>
    <name evidence="1" type="primary">purA</name>
    <name type="ordered locus">Nham_1123</name>
</gene>
<evidence type="ECO:0000255" key="1">
    <source>
        <dbReference type="HAMAP-Rule" id="MF_00011"/>
    </source>
</evidence>
<evidence type="ECO:0000305" key="2"/>
<reference key="1">
    <citation type="submission" date="2006-03" db="EMBL/GenBank/DDBJ databases">
        <title>Complete sequence of chromosome of Nitrobacter hamburgensis X14.</title>
        <authorList>
            <consortium name="US DOE Joint Genome Institute"/>
            <person name="Copeland A."/>
            <person name="Lucas S."/>
            <person name="Lapidus A."/>
            <person name="Barry K."/>
            <person name="Detter J.C."/>
            <person name="Glavina del Rio T."/>
            <person name="Hammon N."/>
            <person name="Israni S."/>
            <person name="Dalin E."/>
            <person name="Tice H."/>
            <person name="Pitluck S."/>
            <person name="Chain P."/>
            <person name="Malfatti S."/>
            <person name="Shin M."/>
            <person name="Vergez L."/>
            <person name="Schmutz J."/>
            <person name="Larimer F."/>
            <person name="Land M."/>
            <person name="Hauser L."/>
            <person name="Kyrpides N."/>
            <person name="Ivanova N."/>
            <person name="Ward B."/>
            <person name="Arp D."/>
            <person name="Klotz M."/>
            <person name="Stein L."/>
            <person name="O'Mullan G."/>
            <person name="Starkenburg S."/>
            <person name="Sayavedra L."/>
            <person name="Poret-Peterson A.T."/>
            <person name="Gentry M.E."/>
            <person name="Bruce D."/>
            <person name="Richardson P."/>
        </authorList>
    </citation>
    <scope>NUCLEOTIDE SEQUENCE [LARGE SCALE GENOMIC DNA]</scope>
    <source>
        <strain>DSM 10229 / NCIMB 13809 / X14</strain>
    </source>
</reference>
<dbReference type="EC" id="6.3.4.4" evidence="1"/>
<dbReference type="EMBL" id="CP000319">
    <property type="protein sequence ID" value="ABE61970.1"/>
    <property type="status" value="ALT_INIT"/>
    <property type="molecule type" value="Genomic_DNA"/>
</dbReference>
<dbReference type="RefSeq" id="WP_041357750.1">
    <property type="nucleotide sequence ID" value="NC_007964.1"/>
</dbReference>
<dbReference type="SMR" id="Q1QP77"/>
<dbReference type="STRING" id="323097.Nham_1123"/>
<dbReference type="KEGG" id="nha:Nham_1123"/>
<dbReference type="eggNOG" id="COG0104">
    <property type="taxonomic scope" value="Bacteria"/>
</dbReference>
<dbReference type="HOGENOM" id="CLU_029848_0_0_5"/>
<dbReference type="OrthoDB" id="9807553at2"/>
<dbReference type="UniPathway" id="UPA00075">
    <property type="reaction ID" value="UER00335"/>
</dbReference>
<dbReference type="Proteomes" id="UP000001953">
    <property type="component" value="Chromosome"/>
</dbReference>
<dbReference type="GO" id="GO:0005737">
    <property type="term" value="C:cytoplasm"/>
    <property type="evidence" value="ECO:0007669"/>
    <property type="project" value="UniProtKB-SubCell"/>
</dbReference>
<dbReference type="GO" id="GO:0004019">
    <property type="term" value="F:adenylosuccinate synthase activity"/>
    <property type="evidence" value="ECO:0007669"/>
    <property type="project" value="UniProtKB-UniRule"/>
</dbReference>
<dbReference type="GO" id="GO:0005525">
    <property type="term" value="F:GTP binding"/>
    <property type="evidence" value="ECO:0007669"/>
    <property type="project" value="UniProtKB-UniRule"/>
</dbReference>
<dbReference type="GO" id="GO:0000287">
    <property type="term" value="F:magnesium ion binding"/>
    <property type="evidence" value="ECO:0007669"/>
    <property type="project" value="UniProtKB-UniRule"/>
</dbReference>
<dbReference type="GO" id="GO:0044208">
    <property type="term" value="P:'de novo' AMP biosynthetic process"/>
    <property type="evidence" value="ECO:0007669"/>
    <property type="project" value="UniProtKB-UniRule"/>
</dbReference>
<dbReference type="GO" id="GO:0046040">
    <property type="term" value="P:IMP metabolic process"/>
    <property type="evidence" value="ECO:0007669"/>
    <property type="project" value="TreeGrafter"/>
</dbReference>
<dbReference type="CDD" id="cd03108">
    <property type="entry name" value="AdSS"/>
    <property type="match status" value="1"/>
</dbReference>
<dbReference type="FunFam" id="1.10.300.10:FF:000001">
    <property type="entry name" value="Adenylosuccinate synthetase"/>
    <property type="match status" value="1"/>
</dbReference>
<dbReference type="FunFam" id="3.90.170.10:FF:000001">
    <property type="entry name" value="Adenylosuccinate synthetase"/>
    <property type="match status" value="1"/>
</dbReference>
<dbReference type="Gene3D" id="3.40.440.10">
    <property type="entry name" value="Adenylosuccinate Synthetase, subunit A, domain 1"/>
    <property type="match status" value="1"/>
</dbReference>
<dbReference type="Gene3D" id="1.10.300.10">
    <property type="entry name" value="Adenylosuccinate Synthetase, subunit A, domain 2"/>
    <property type="match status" value="1"/>
</dbReference>
<dbReference type="Gene3D" id="3.90.170.10">
    <property type="entry name" value="Adenylosuccinate Synthetase, subunit A, domain 3"/>
    <property type="match status" value="1"/>
</dbReference>
<dbReference type="HAMAP" id="MF_00011">
    <property type="entry name" value="Adenylosucc_synth"/>
    <property type="match status" value="1"/>
</dbReference>
<dbReference type="InterPro" id="IPR018220">
    <property type="entry name" value="Adenylosuccin_syn_GTP-bd"/>
</dbReference>
<dbReference type="InterPro" id="IPR033128">
    <property type="entry name" value="Adenylosuccin_syn_Lys_AS"/>
</dbReference>
<dbReference type="InterPro" id="IPR042109">
    <property type="entry name" value="Adenylosuccinate_synth_dom1"/>
</dbReference>
<dbReference type="InterPro" id="IPR042110">
    <property type="entry name" value="Adenylosuccinate_synth_dom2"/>
</dbReference>
<dbReference type="InterPro" id="IPR042111">
    <property type="entry name" value="Adenylosuccinate_synth_dom3"/>
</dbReference>
<dbReference type="InterPro" id="IPR001114">
    <property type="entry name" value="Adenylosuccinate_synthetase"/>
</dbReference>
<dbReference type="InterPro" id="IPR027417">
    <property type="entry name" value="P-loop_NTPase"/>
</dbReference>
<dbReference type="NCBIfam" id="NF002223">
    <property type="entry name" value="PRK01117.1"/>
    <property type="match status" value="1"/>
</dbReference>
<dbReference type="NCBIfam" id="TIGR00184">
    <property type="entry name" value="purA"/>
    <property type="match status" value="1"/>
</dbReference>
<dbReference type="PANTHER" id="PTHR11846">
    <property type="entry name" value="ADENYLOSUCCINATE SYNTHETASE"/>
    <property type="match status" value="1"/>
</dbReference>
<dbReference type="PANTHER" id="PTHR11846:SF0">
    <property type="entry name" value="ADENYLOSUCCINATE SYNTHETASE"/>
    <property type="match status" value="1"/>
</dbReference>
<dbReference type="Pfam" id="PF00709">
    <property type="entry name" value="Adenylsucc_synt"/>
    <property type="match status" value="1"/>
</dbReference>
<dbReference type="SMART" id="SM00788">
    <property type="entry name" value="Adenylsucc_synt"/>
    <property type="match status" value="1"/>
</dbReference>
<dbReference type="SUPFAM" id="SSF52540">
    <property type="entry name" value="P-loop containing nucleoside triphosphate hydrolases"/>
    <property type="match status" value="1"/>
</dbReference>
<dbReference type="PROSITE" id="PS01266">
    <property type="entry name" value="ADENYLOSUCCIN_SYN_1"/>
    <property type="match status" value="1"/>
</dbReference>
<dbReference type="PROSITE" id="PS00513">
    <property type="entry name" value="ADENYLOSUCCIN_SYN_2"/>
    <property type="match status" value="1"/>
</dbReference>
<protein>
    <recommendedName>
        <fullName evidence="1">Adenylosuccinate synthetase</fullName>
        <shortName evidence="1">AMPSase</shortName>
        <shortName evidence="1">AdSS</shortName>
        <ecNumber evidence="1">6.3.4.4</ecNumber>
    </recommendedName>
    <alternativeName>
        <fullName evidence="1">IMP--aspartate ligase</fullName>
    </alternativeName>
</protein>
<organism>
    <name type="scientific">Nitrobacter hamburgensis (strain DSM 10229 / NCIMB 13809 / X14)</name>
    <dbReference type="NCBI Taxonomy" id="323097"/>
    <lineage>
        <taxon>Bacteria</taxon>
        <taxon>Pseudomonadati</taxon>
        <taxon>Pseudomonadota</taxon>
        <taxon>Alphaproteobacteria</taxon>
        <taxon>Hyphomicrobiales</taxon>
        <taxon>Nitrobacteraceae</taxon>
        <taxon>Nitrobacter</taxon>
    </lineage>
</organism>
<sequence>MTNVVVVGAQWGDEGKGKIVDWLSEQADIVVRFQGGHNAGHTLVIDGNTYKLALLPSGVVRSSKLSIIGNGVVFDPQAFVDEVAKLKGQGVKIGPDNLRVAENVTLILPLHRELDSLRENASAATAIGTTQRGIGPAYEDKVGRRAIRLMDLADPQTLPHKVERLLTHHNALRRGHGIAEVDSGALLKDLAAIAPRVLPYADSVWNLLDHKRREGKRILFEGAQGALLDVDHGTYPYVTSSNTVAAQAATGTGMGPSALGYVLGICKSYTTRVGQGPFPTELKDEIGELIGQRGKEFGVNTGRKRRCGWFDAMLVRQTVRTSGIHGLALTKLDILDGFDTIEVCTGYRLDGKEIDHLPAGEGAQARVEPIYETIEGWKQPTANARSWADLPAQAIKYVRRIEELVGCPVALLSTSPEREDTILVQNPFEA</sequence>